<protein>
    <recommendedName>
        <fullName evidence="1">Small ribosomal subunit protein uS17</fullName>
    </recommendedName>
    <alternativeName>
        <fullName evidence="2">30S ribosomal protein S17</fullName>
    </alternativeName>
</protein>
<sequence length="115" mass="12782">MPRRVLTGRVTSDKMDKTVTVLVDRRIIHPLYKKFIRKSKKYAAHDEANECREGDIVRIVECPPISKRKTWEVVWRNGHVLSTAHKEAIDAAATQIAHAEASGEAAAAAAEHQGA</sequence>
<name>RS17_GRABC</name>
<comment type="function">
    <text evidence="1">One of the primary rRNA binding proteins, it binds specifically to the 5'-end of 16S ribosomal RNA.</text>
</comment>
<comment type="subunit">
    <text evidence="1">Part of the 30S ribosomal subunit.</text>
</comment>
<comment type="similarity">
    <text evidence="1">Belongs to the universal ribosomal protein uS17 family.</text>
</comment>
<feature type="chain" id="PRO_1000054958" description="Small ribosomal subunit protein uS17">
    <location>
        <begin position="1"/>
        <end position="115"/>
    </location>
</feature>
<gene>
    <name evidence="1" type="primary">rpsQ</name>
    <name type="ordered locus">GbCGDNIH1_0563</name>
</gene>
<proteinExistence type="inferred from homology"/>
<reference key="1">
    <citation type="journal article" date="2007" name="J. Bacteriol.">
        <title>Genome sequence analysis of the emerging human pathogenic acetic acid bacterium Granulibacter bethesdensis.</title>
        <authorList>
            <person name="Greenberg D.E."/>
            <person name="Porcella S.F."/>
            <person name="Zelazny A.M."/>
            <person name="Virtaneva K."/>
            <person name="Sturdevant D.E."/>
            <person name="Kupko J.J. III"/>
            <person name="Barbian K.D."/>
            <person name="Babar A."/>
            <person name="Dorward D.W."/>
            <person name="Holland S.M."/>
        </authorList>
    </citation>
    <scope>NUCLEOTIDE SEQUENCE [LARGE SCALE GENOMIC DNA]</scope>
    <source>
        <strain>ATCC BAA-1260 / CGDNIH1</strain>
    </source>
</reference>
<accession>Q0BUP1</accession>
<organism>
    <name type="scientific">Granulibacter bethesdensis (strain ATCC BAA-1260 / CGDNIH1)</name>
    <dbReference type="NCBI Taxonomy" id="391165"/>
    <lineage>
        <taxon>Bacteria</taxon>
        <taxon>Pseudomonadati</taxon>
        <taxon>Pseudomonadota</taxon>
        <taxon>Alphaproteobacteria</taxon>
        <taxon>Acetobacterales</taxon>
        <taxon>Acetobacteraceae</taxon>
        <taxon>Granulibacter</taxon>
    </lineage>
</organism>
<dbReference type="EMBL" id="CP000394">
    <property type="protein sequence ID" value="ABI61461.1"/>
    <property type="molecule type" value="Genomic_DNA"/>
</dbReference>
<dbReference type="SMR" id="Q0BUP1"/>
<dbReference type="STRING" id="391165.GbCGDNIH1_0563"/>
<dbReference type="KEGG" id="gbe:GbCGDNIH1_0563"/>
<dbReference type="eggNOG" id="COG0186">
    <property type="taxonomic scope" value="Bacteria"/>
</dbReference>
<dbReference type="HOGENOM" id="CLU_073626_1_2_5"/>
<dbReference type="OrthoDB" id="9811714at2"/>
<dbReference type="Proteomes" id="UP000001963">
    <property type="component" value="Chromosome"/>
</dbReference>
<dbReference type="GO" id="GO:0022627">
    <property type="term" value="C:cytosolic small ribosomal subunit"/>
    <property type="evidence" value="ECO:0007669"/>
    <property type="project" value="TreeGrafter"/>
</dbReference>
<dbReference type="GO" id="GO:0019843">
    <property type="term" value="F:rRNA binding"/>
    <property type="evidence" value="ECO:0007669"/>
    <property type="project" value="UniProtKB-UniRule"/>
</dbReference>
<dbReference type="GO" id="GO:0003735">
    <property type="term" value="F:structural constituent of ribosome"/>
    <property type="evidence" value="ECO:0007669"/>
    <property type="project" value="InterPro"/>
</dbReference>
<dbReference type="GO" id="GO:0006412">
    <property type="term" value="P:translation"/>
    <property type="evidence" value="ECO:0007669"/>
    <property type="project" value="UniProtKB-UniRule"/>
</dbReference>
<dbReference type="CDD" id="cd00364">
    <property type="entry name" value="Ribosomal_uS17"/>
    <property type="match status" value="1"/>
</dbReference>
<dbReference type="Gene3D" id="2.40.50.140">
    <property type="entry name" value="Nucleic acid-binding proteins"/>
    <property type="match status" value="1"/>
</dbReference>
<dbReference type="HAMAP" id="MF_01345_B">
    <property type="entry name" value="Ribosomal_uS17_B"/>
    <property type="match status" value="1"/>
</dbReference>
<dbReference type="InterPro" id="IPR012340">
    <property type="entry name" value="NA-bd_OB-fold"/>
</dbReference>
<dbReference type="InterPro" id="IPR000266">
    <property type="entry name" value="Ribosomal_uS17"/>
</dbReference>
<dbReference type="InterPro" id="IPR019984">
    <property type="entry name" value="Ribosomal_uS17_bact/chlr"/>
</dbReference>
<dbReference type="NCBIfam" id="NF004123">
    <property type="entry name" value="PRK05610.1"/>
    <property type="match status" value="1"/>
</dbReference>
<dbReference type="NCBIfam" id="TIGR03635">
    <property type="entry name" value="uS17_bact"/>
    <property type="match status" value="1"/>
</dbReference>
<dbReference type="PANTHER" id="PTHR10744">
    <property type="entry name" value="40S RIBOSOMAL PROTEIN S11 FAMILY MEMBER"/>
    <property type="match status" value="1"/>
</dbReference>
<dbReference type="PANTHER" id="PTHR10744:SF1">
    <property type="entry name" value="SMALL RIBOSOMAL SUBUNIT PROTEIN US17M"/>
    <property type="match status" value="1"/>
</dbReference>
<dbReference type="Pfam" id="PF00366">
    <property type="entry name" value="Ribosomal_S17"/>
    <property type="match status" value="1"/>
</dbReference>
<dbReference type="PRINTS" id="PR00973">
    <property type="entry name" value="RIBOSOMALS17"/>
</dbReference>
<dbReference type="SUPFAM" id="SSF50249">
    <property type="entry name" value="Nucleic acid-binding proteins"/>
    <property type="match status" value="1"/>
</dbReference>
<keyword id="KW-1185">Reference proteome</keyword>
<keyword id="KW-0687">Ribonucleoprotein</keyword>
<keyword id="KW-0689">Ribosomal protein</keyword>
<keyword id="KW-0694">RNA-binding</keyword>
<keyword id="KW-0699">rRNA-binding</keyword>
<evidence type="ECO:0000255" key="1">
    <source>
        <dbReference type="HAMAP-Rule" id="MF_01345"/>
    </source>
</evidence>
<evidence type="ECO:0000305" key="2"/>